<reference key="1">
    <citation type="journal article" date="1991" name="J. Bacteriol.">
        <title>Nucleotide sequence and functions of mrk determinants necessary for expression of type 3 fimbriae in Klebsiella pneumoniae.</title>
        <authorList>
            <person name="Allen B.L."/>
            <person name="Gerlach G.-F."/>
            <person name="Clegg S."/>
        </authorList>
    </citation>
    <scope>NUCLEOTIDE SEQUENCE [GENOMIC DNA]</scope>
    <source>
        <strain>IA565</strain>
    </source>
</reference>
<organism>
    <name type="scientific">Klebsiella pneumoniae</name>
    <dbReference type="NCBI Taxonomy" id="573"/>
    <lineage>
        <taxon>Bacteria</taxon>
        <taxon>Pseudomonadati</taxon>
        <taxon>Pseudomonadota</taxon>
        <taxon>Gammaproteobacteria</taxon>
        <taxon>Enterobacterales</taxon>
        <taxon>Enterobacteriaceae</taxon>
        <taxon>Klebsiella/Raoultella group</taxon>
        <taxon>Klebsiella</taxon>
        <taxon>Klebsiella pneumoniae complex</taxon>
    </lineage>
</organism>
<proteinExistence type="evidence at protein level"/>
<evidence type="ECO:0000255" key="1">
    <source>
        <dbReference type="PROSITE-ProRule" id="PRU00112"/>
    </source>
</evidence>
<evidence type="ECO:0000255" key="2">
    <source>
        <dbReference type="PROSITE-ProRule" id="PRU00169"/>
    </source>
</evidence>
<evidence type="ECO:0007829" key="3">
    <source>
        <dbReference type="PDB" id="2QV0"/>
    </source>
</evidence>
<name>MRKE_KLEPN</name>
<feature type="chain" id="PRO_0000081140" description="Protein MrkE">
    <location>
        <begin position="1"/>
        <end position="269"/>
    </location>
</feature>
<feature type="domain" description="Response regulatory" evidence="2">
    <location>
        <begin position="59"/>
        <end position="173"/>
    </location>
</feature>
<feature type="domain" description="HTH LytTR-type" evidence="1">
    <location>
        <begin position="197"/>
        <end position="269"/>
    </location>
</feature>
<feature type="modified residue" description="4-aspartylphosphate" evidence="2">
    <location>
        <position position="110"/>
    </location>
</feature>
<feature type="strand" evidence="3">
    <location>
        <begin position="59"/>
        <end position="63"/>
    </location>
</feature>
<feature type="helix" evidence="3">
    <location>
        <begin position="67"/>
        <end position="80"/>
    </location>
</feature>
<feature type="strand" evidence="3">
    <location>
        <begin position="84"/>
        <end position="90"/>
    </location>
</feature>
<feature type="helix" evidence="3">
    <location>
        <begin position="92"/>
        <end position="101"/>
    </location>
</feature>
<feature type="strand" evidence="3">
    <location>
        <begin position="105"/>
        <end position="109"/>
    </location>
</feature>
<feature type="strand" evidence="3">
    <location>
        <begin position="114"/>
        <end position="116"/>
    </location>
</feature>
<feature type="helix" evidence="3">
    <location>
        <begin position="118"/>
        <end position="125"/>
    </location>
</feature>
<feature type="strand" evidence="3">
    <location>
        <begin position="133"/>
        <end position="139"/>
    </location>
</feature>
<feature type="helix" evidence="3">
    <location>
        <begin position="144"/>
        <end position="149"/>
    </location>
</feature>
<feature type="strand" evidence="3">
    <location>
        <begin position="153"/>
        <end position="159"/>
    </location>
</feature>
<feature type="helix" evidence="3">
    <location>
        <begin position="162"/>
        <end position="178"/>
    </location>
</feature>
<comment type="function">
    <text>May be involved in the regulation of fimbrial expression.</text>
</comment>
<protein>
    <recommendedName>
        <fullName>Protein MrkE</fullName>
    </recommendedName>
</protein>
<keyword id="KW-0002">3D-structure</keyword>
<keyword id="KW-0238">DNA-binding</keyword>
<keyword id="KW-1029">Fimbrium biogenesis</keyword>
<keyword id="KW-0597">Phosphoprotein</keyword>
<keyword id="KW-0804">Transcription</keyword>
<keyword id="KW-0805">Transcription regulation</keyword>
<keyword id="KW-0902">Two-component regulatory system</keyword>
<dbReference type="EMBL" id="M55912">
    <property type="protein sequence ID" value="AAA25092.1"/>
    <property type="molecule type" value="Genomic_DNA"/>
</dbReference>
<dbReference type="PIR" id="A39142">
    <property type="entry name" value="A39142"/>
</dbReference>
<dbReference type="PDB" id="2QV0">
    <property type="method" value="X-ray"/>
    <property type="resolution" value="2.40 A"/>
    <property type="chains" value="A/B=52-183"/>
</dbReference>
<dbReference type="PDBsum" id="2QV0"/>
<dbReference type="SMR" id="P21649"/>
<dbReference type="EvolutionaryTrace" id="P21649"/>
<dbReference type="GO" id="GO:0005829">
    <property type="term" value="C:cytosol"/>
    <property type="evidence" value="ECO:0007669"/>
    <property type="project" value="TreeGrafter"/>
</dbReference>
<dbReference type="GO" id="GO:0032993">
    <property type="term" value="C:protein-DNA complex"/>
    <property type="evidence" value="ECO:0007669"/>
    <property type="project" value="TreeGrafter"/>
</dbReference>
<dbReference type="GO" id="GO:0000156">
    <property type="term" value="F:phosphorelay response regulator activity"/>
    <property type="evidence" value="ECO:0007669"/>
    <property type="project" value="TreeGrafter"/>
</dbReference>
<dbReference type="GO" id="GO:0000976">
    <property type="term" value="F:transcription cis-regulatory region binding"/>
    <property type="evidence" value="ECO:0007669"/>
    <property type="project" value="TreeGrafter"/>
</dbReference>
<dbReference type="GO" id="GO:0006355">
    <property type="term" value="P:regulation of DNA-templated transcription"/>
    <property type="evidence" value="ECO:0007669"/>
    <property type="project" value="TreeGrafter"/>
</dbReference>
<dbReference type="CDD" id="cd17532">
    <property type="entry name" value="REC_LytTR_AlgR-like"/>
    <property type="match status" value="1"/>
</dbReference>
<dbReference type="Gene3D" id="2.40.50.40">
    <property type="match status" value="1"/>
</dbReference>
<dbReference type="Gene3D" id="3.40.50.2300">
    <property type="match status" value="1"/>
</dbReference>
<dbReference type="InterPro" id="IPR011006">
    <property type="entry name" value="CheY-like_superfamily"/>
</dbReference>
<dbReference type="InterPro" id="IPR007492">
    <property type="entry name" value="LytTR_DNA-bd_dom"/>
</dbReference>
<dbReference type="InterPro" id="IPR001789">
    <property type="entry name" value="Sig_transdc_resp-reg_receiver"/>
</dbReference>
<dbReference type="InterPro" id="IPR039420">
    <property type="entry name" value="WalR-like"/>
</dbReference>
<dbReference type="PANTHER" id="PTHR48111">
    <property type="entry name" value="REGULATOR OF RPOS"/>
    <property type="match status" value="1"/>
</dbReference>
<dbReference type="PANTHER" id="PTHR48111:SF17">
    <property type="entry name" value="TRANSCRIPTIONAL REGULATORY PROTEIN YPDB"/>
    <property type="match status" value="1"/>
</dbReference>
<dbReference type="Pfam" id="PF00072">
    <property type="entry name" value="Response_reg"/>
    <property type="match status" value="1"/>
</dbReference>
<dbReference type="SMART" id="SM00448">
    <property type="entry name" value="REC"/>
    <property type="match status" value="1"/>
</dbReference>
<dbReference type="SUPFAM" id="SSF52172">
    <property type="entry name" value="CheY-like"/>
    <property type="match status" value="1"/>
</dbReference>
<dbReference type="PROSITE" id="PS50930">
    <property type="entry name" value="HTH_LYTTR"/>
    <property type="match status" value="1"/>
</dbReference>
<dbReference type="PROSITE" id="PS50110">
    <property type="entry name" value="RESPONSE_REGULATORY"/>
    <property type="match status" value="1"/>
</dbReference>
<sequence length="269" mass="30290">MPGNKIGLLNVHHRVKLLYGEGLHIRNLTPGTEIAFYVPNNSTPQGDGVAVVMSGEKMKVIIVEDEFLAQQELSWLINTHSQMEIVGSFDDGLDVLKFLQHNKVDAIFLDINIPSLDGVLLAQNISQFAHKPFIVFITAWKEHAVEAFELEAFDYILKPYQESRIINMLQKLTTAWEQQNNAASGLASAAPRENDTINLIKDERIIVTSIHDIYYAEAHEKMTFVYTRRESFVMPMNITEFVPDALNIAASGQSKFLLTVAQVSIANRF</sequence>
<gene>
    <name type="primary">mrkE</name>
</gene>
<accession>P21649</accession>